<organism>
    <name type="scientific">Pongo pygmaeus</name>
    <name type="common">Bornean orangutan</name>
    <dbReference type="NCBI Taxonomy" id="9600"/>
    <lineage>
        <taxon>Eukaryota</taxon>
        <taxon>Metazoa</taxon>
        <taxon>Chordata</taxon>
        <taxon>Craniata</taxon>
        <taxon>Vertebrata</taxon>
        <taxon>Euteleostomi</taxon>
        <taxon>Mammalia</taxon>
        <taxon>Eutheria</taxon>
        <taxon>Euarchontoglires</taxon>
        <taxon>Primates</taxon>
        <taxon>Haplorrhini</taxon>
        <taxon>Catarrhini</taxon>
        <taxon>Hominidae</taxon>
        <taxon>Pongo</taxon>
    </lineage>
</organism>
<proteinExistence type="inferred from homology"/>
<sequence>MSPKRDGLGTGDGLHSQVLQEQVSTGDNLHECDSQGPSKHTLVREGKTYKCKECGSVFNKNSLLVRHQQIHTGVKPYECQECGKAFPEKVDFVRHVRIHTGEKPCKCVECGKVFNRRSHLLCHHQIHTGEKPYECSECGRTFSYHSVFIQHRMTHTGEKLFGCKECGKSFYYNSSLTRHMKIHTREKPYKCSECGKTFTYHSVFFRHSMTHTAGKPYECKECGKGFYYSYSLTRHTRSHTGEKPYECLEHRKAFGYHSAFAQQSKIHSGGKNL</sequence>
<keyword id="KW-0238">DNA-binding</keyword>
<keyword id="KW-0479">Metal-binding</keyword>
<keyword id="KW-0539">Nucleus</keyword>
<keyword id="KW-0677">Repeat</keyword>
<keyword id="KW-0804">Transcription</keyword>
<keyword id="KW-0805">Transcription regulation</keyword>
<keyword id="KW-0862">Zinc</keyword>
<keyword id="KW-0863">Zinc-finger</keyword>
<protein>
    <recommendedName>
        <fullName>Zinc finger protein 80</fullName>
    </recommendedName>
</protein>
<evidence type="ECO:0000255" key="1">
    <source>
        <dbReference type="PROSITE-ProRule" id="PRU00042"/>
    </source>
</evidence>
<evidence type="ECO:0000305" key="2"/>
<comment type="function">
    <text>May be involved in transcriptional regulation.</text>
</comment>
<comment type="subcellular location">
    <subcellularLocation>
        <location evidence="2">Nucleus</location>
    </subcellularLocation>
</comment>
<comment type="similarity">
    <text evidence="2">Belongs to the krueppel C2H2-type zinc-finger protein family.</text>
</comment>
<name>ZNF80_PONPY</name>
<reference key="1">
    <citation type="journal article" date="1995" name="Virology">
        <title>Mobilization of an ERV9 human endogenous retroviral element during primate evolution.</title>
        <authorList>
            <person name="di Cristofano A."/>
            <person name="Strazzullo M."/>
            <person name="Parisi T."/>
            <person name="la Mantia G."/>
        </authorList>
    </citation>
    <scope>NUCLEOTIDE SEQUENCE [GENOMIC DNA]</scope>
</reference>
<gene>
    <name type="primary">ZNF80</name>
</gene>
<feature type="chain" id="PRO_0000047394" description="Zinc finger protein 80">
    <location>
        <begin position="1"/>
        <end position="273"/>
    </location>
</feature>
<feature type="zinc finger region" description="C2H2-type 1" evidence="1">
    <location>
        <begin position="49"/>
        <end position="71"/>
    </location>
</feature>
<feature type="zinc finger region" description="C2H2-type 2" evidence="1">
    <location>
        <begin position="77"/>
        <end position="99"/>
    </location>
</feature>
<feature type="zinc finger region" description="C2H2-type 3" evidence="1">
    <location>
        <begin position="103"/>
        <end position="127"/>
    </location>
</feature>
<feature type="zinc finger region" description="C2H2-type 4" evidence="1">
    <location>
        <begin position="133"/>
        <end position="155"/>
    </location>
</feature>
<feature type="zinc finger region" description="C2H2-type 5" evidence="1">
    <location>
        <begin position="161"/>
        <end position="183"/>
    </location>
</feature>
<feature type="zinc finger region" description="C2H2-type 6" evidence="1">
    <location>
        <begin position="189"/>
        <end position="211"/>
    </location>
</feature>
<feature type="zinc finger region" description="C2H2-type 7" evidence="1">
    <location>
        <begin position="217"/>
        <end position="239"/>
    </location>
</feature>
<accession>P51507</accession>
<dbReference type="EMBL" id="X89630">
    <property type="protein sequence ID" value="CAA61772.1"/>
    <property type="molecule type" value="Genomic_DNA"/>
</dbReference>
<dbReference type="SMR" id="P51507"/>
<dbReference type="GO" id="GO:0005634">
    <property type="term" value="C:nucleus"/>
    <property type="evidence" value="ECO:0007669"/>
    <property type="project" value="UniProtKB-SubCell"/>
</dbReference>
<dbReference type="GO" id="GO:0000981">
    <property type="term" value="F:DNA-binding transcription factor activity, RNA polymerase II-specific"/>
    <property type="evidence" value="ECO:0007669"/>
    <property type="project" value="TreeGrafter"/>
</dbReference>
<dbReference type="GO" id="GO:0000977">
    <property type="term" value="F:RNA polymerase II transcription regulatory region sequence-specific DNA binding"/>
    <property type="evidence" value="ECO:0007669"/>
    <property type="project" value="TreeGrafter"/>
</dbReference>
<dbReference type="GO" id="GO:0008270">
    <property type="term" value="F:zinc ion binding"/>
    <property type="evidence" value="ECO:0007669"/>
    <property type="project" value="UniProtKB-KW"/>
</dbReference>
<dbReference type="FunFam" id="3.30.160.60:FF:000508">
    <property type="entry name" value="Myeloid zinc finger 1"/>
    <property type="match status" value="1"/>
</dbReference>
<dbReference type="FunFam" id="3.30.160.60:FF:000295">
    <property type="entry name" value="zinc finger protein 19"/>
    <property type="match status" value="1"/>
</dbReference>
<dbReference type="FunFam" id="3.30.160.60:FF:000352">
    <property type="entry name" value="zinc finger protein 3 homolog"/>
    <property type="match status" value="1"/>
</dbReference>
<dbReference type="FunFam" id="3.30.160.60:FF:002341">
    <property type="entry name" value="Zinc finger protein 80"/>
    <property type="match status" value="1"/>
</dbReference>
<dbReference type="FunFam" id="3.30.160.60:FF:002593">
    <property type="entry name" value="Zinc finger protein 80"/>
    <property type="match status" value="1"/>
</dbReference>
<dbReference type="FunFam" id="3.30.160.60:FF:000896">
    <property type="entry name" value="Zinc finger protein 805"/>
    <property type="match status" value="1"/>
</dbReference>
<dbReference type="FunFam" id="3.30.160.60:FF:001111">
    <property type="entry name" value="Zinc finger protein 92 homolog"/>
    <property type="match status" value="1"/>
</dbReference>
<dbReference type="Gene3D" id="3.30.160.60">
    <property type="entry name" value="Classic Zinc Finger"/>
    <property type="match status" value="8"/>
</dbReference>
<dbReference type="InterPro" id="IPR050717">
    <property type="entry name" value="C2H2-ZF_Transcription_Reg"/>
</dbReference>
<dbReference type="InterPro" id="IPR036236">
    <property type="entry name" value="Znf_C2H2_sf"/>
</dbReference>
<dbReference type="InterPro" id="IPR013087">
    <property type="entry name" value="Znf_C2H2_type"/>
</dbReference>
<dbReference type="PANTHER" id="PTHR14196">
    <property type="entry name" value="ODD-SKIPPED - RELATED"/>
    <property type="match status" value="1"/>
</dbReference>
<dbReference type="PANTHER" id="PTHR14196:SF12">
    <property type="entry name" value="ZINC FINGER PROTEIN 208-LIKE"/>
    <property type="match status" value="1"/>
</dbReference>
<dbReference type="Pfam" id="PF00096">
    <property type="entry name" value="zf-C2H2"/>
    <property type="match status" value="6"/>
</dbReference>
<dbReference type="SMART" id="SM00355">
    <property type="entry name" value="ZnF_C2H2"/>
    <property type="match status" value="7"/>
</dbReference>
<dbReference type="SUPFAM" id="SSF57667">
    <property type="entry name" value="beta-beta-alpha zinc fingers"/>
    <property type="match status" value="4"/>
</dbReference>
<dbReference type="PROSITE" id="PS00028">
    <property type="entry name" value="ZINC_FINGER_C2H2_1"/>
    <property type="match status" value="7"/>
</dbReference>
<dbReference type="PROSITE" id="PS50157">
    <property type="entry name" value="ZINC_FINGER_C2H2_2"/>
    <property type="match status" value="7"/>
</dbReference>